<proteinExistence type="inferred from homology"/>
<reference key="1">
    <citation type="journal article" date="1996" name="Biochimie">
        <title>Comparative analysis of the cya locus in enterobacteria and related Gram-negative facultative anaerobes.</title>
        <authorList>
            <person name="Trotot P."/>
            <person name="Sismeiro O."/>
            <person name="Vivares C."/>
            <person name="Glaser P."/>
            <person name="Bresson-Roy A."/>
            <person name="Danchin A."/>
        </authorList>
    </citation>
    <scope>NUCLEOTIDE SEQUENCE [GENOMIC DNA]</scope>
</reference>
<organism>
    <name type="scientific">Proteus mirabilis</name>
    <dbReference type="NCBI Taxonomy" id="584"/>
    <lineage>
        <taxon>Bacteria</taxon>
        <taxon>Pseudomonadati</taxon>
        <taxon>Pseudomonadota</taxon>
        <taxon>Gammaproteobacteria</taxon>
        <taxon>Enterobacterales</taxon>
        <taxon>Morganellaceae</taxon>
        <taxon>Proteus</taxon>
    </lineage>
</organism>
<dbReference type="EC" id="2.5.1.61"/>
<dbReference type="EMBL" id="U22969">
    <property type="protein sequence ID" value="AAC44329.1"/>
    <property type="molecule type" value="Genomic_DNA"/>
</dbReference>
<dbReference type="SMR" id="Q59684"/>
<dbReference type="STRING" id="584.AOUC001_17905"/>
<dbReference type="UniPathway" id="UPA00251">
    <property type="reaction ID" value="UER00319"/>
</dbReference>
<dbReference type="GO" id="GO:0005737">
    <property type="term" value="C:cytoplasm"/>
    <property type="evidence" value="ECO:0007669"/>
    <property type="project" value="TreeGrafter"/>
</dbReference>
<dbReference type="GO" id="GO:0004418">
    <property type="term" value="F:hydroxymethylbilane synthase activity"/>
    <property type="evidence" value="ECO:0007669"/>
    <property type="project" value="UniProtKB-UniRule"/>
</dbReference>
<dbReference type="GO" id="GO:0006782">
    <property type="term" value="P:protoporphyrinogen IX biosynthetic process"/>
    <property type="evidence" value="ECO:0007669"/>
    <property type="project" value="UniProtKB-UniRule"/>
</dbReference>
<dbReference type="CDD" id="cd13646">
    <property type="entry name" value="PBP2_EcHMBS_like"/>
    <property type="match status" value="1"/>
</dbReference>
<dbReference type="FunFam" id="3.30.160.40:FF:000002">
    <property type="entry name" value="Porphobilinogen deaminase"/>
    <property type="match status" value="1"/>
</dbReference>
<dbReference type="FunFam" id="3.40.190.10:FF:000004">
    <property type="entry name" value="Porphobilinogen deaminase"/>
    <property type="match status" value="1"/>
</dbReference>
<dbReference type="FunFam" id="3.40.190.10:FF:000005">
    <property type="entry name" value="Porphobilinogen deaminase"/>
    <property type="match status" value="1"/>
</dbReference>
<dbReference type="Gene3D" id="3.40.190.10">
    <property type="entry name" value="Periplasmic binding protein-like II"/>
    <property type="match status" value="2"/>
</dbReference>
<dbReference type="Gene3D" id="3.30.160.40">
    <property type="entry name" value="Porphobilinogen deaminase, C-terminal domain"/>
    <property type="match status" value="1"/>
</dbReference>
<dbReference type="HAMAP" id="MF_00260">
    <property type="entry name" value="Porphobil_deam"/>
    <property type="match status" value="1"/>
</dbReference>
<dbReference type="InterPro" id="IPR000860">
    <property type="entry name" value="HemC"/>
</dbReference>
<dbReference type="InterPro" id="IPR022419">
    <property type="entry name" value="Porphobilin_deaminase_cofac_BS"/>
</dbReference>
<dbReference type="InterPro" id="IPR022417">
    <property type="entry name" value="Porphobilin_deaminase_N"/>
</dbReference>
<dbReference type="InterPro" id="IPR022418">
    <property type="entry name" value="Porphobilinogen_deaminase_C"/>
</dbReference>
<dbReference type="InterPro" id="IPR036803">
    <property type="entry name" value="Porphobilinogen_deaminase_C_sf"/>
</dbReference>
<dbReference type="NCBIfam" id="TIGR00212">
    <property type="entry name" value="hemC"/>
    <property type="match status" value="1"/>
</dbReference>
<dbReference type="PANTHER" id="PTHR11557">
    <property type="entry name" value="PORPHOBILINOGEN DEAMINASE"/>
    <property type="match status" value="1"/>
</dbReference>
<dbReference type="PANTHER" id="PTHR11557:SF0">
    <property type="entry name" value="PORPHOBILINOGEN DEAMINASE"/>
    <property type="match status" value="1"/>
</dbReference>
<dbReference type="Pfam" id="PF01379">
    <property type="entry name" value="Porphobil_deam"/>
    <property type="match status" value="1"/>
</dbReference>
<dbReference type="Pfam" id="PF03900">
    <property type="entry name" value="Porphobil_deamC"/>
    <property type="match status" value="1"/>
</dbReference>
<dbReference type="PIRSF" id="PIRSF001438">
    <property type="entry name" value="4pyrrol_synth_OHMeBilane_synth"/>
    <property type="match status" value="1"/>
</dbReference>
<dbReference type="PRINTS" id="PR00151">
    <property type="entry name" value="PORPHBDMNASE"/>
</dbReference>
<dbReference type="SUPFAM" id="SSF53850">
    <property type="entry name" value="Periplasmic binding protein-like II"/>
    <property type="match status" value="1"/>
</dbReference>
<dbReference type="SUPFAM" id="SSF54782">
    <property type="entry name" value="Porphobilinogen deaminase (hydroxymethylbilane synthase), C-terminal domain"/>
    <property type="match status" value="1"/>
</dbReference>
<dbReference type="PROSITE" id="PS00533">
    <property type="entry name" value="PORPHOBILINOGEN_DEAM"/>
    <property type="match status" value="1"/>
</dbReference>
<protein>
    <recommendedName>
        <fullName>Porphobilinogen deaminase</fullName>
        <shortName>PBG</shortName>
        <ecNumber>2.5.1.61</ecNumber>
    </recommendedName>
    <alternativeName>
        <fullName>Hydroxymethylbilane synthase</fullName>
        <shortName>HMBS</shortName>
    </alternativeName>
    <alternativeName>
        <fullName>Pre-uroporphyrinogen synthase</fullName>
    </alternativeName>
</protein>
<gene>
    <name type="primary">hemC</name>
</gene>
<keyword id="KW-0627">Porphyrin biosynthesis</keyword>
<keyword id="KW-0808">Transferase</keyword>
<feature type="chain" id="PRO_0000142971" description="Porphobilinogen deaminase">
    <location>
        <begin position="1"/>
        <end position="313"/>
    </location>
</feature>
<feature type="modified residue" description="S-(dipyrrolylmethanemethyl)cysteine" evidence="1">
    <location>
        <position position="242"/>
    </location>
</feature>
<name>HEM3_PROMI</name>
<accession>Q59684</accession>
<evidence type="ECO:0000250" key="1"/>
<evidence type="ECO:0000305" key="2"/>
<sequence length="313" mass="33912">MPKSTIRIATRQSPLAMWQALYVKEQLQIAHPSLVVELVPMVTKGDIILDTPLAKVGGKGLFVKELELALLSSRADIAVHSMKDVPIDFPEGLGLVTICEREDPRDAFVSNHYDSLEQLPAGSVVGTSSLRRQCQLKALRPDLIIRDLRGNVGTRLSKLDNGDYDAIILAVAGLKRLKLTERIRSSLSAEQSLPAVGQGAVGIECRLDDHDTQALLAALNHADTATCVKAERAMNTRLEGGCQVPIGSYAIWQNDKIWLRALVGAPDGKTILRGERLVSPEDAEQAGISLAEELLDKGAREILTAVYQGNTAI</sequence>
<comment type="function">
    <text evidence="1">Tetrapolymerization of the monopyrrole PBG into the hydroxymethylbilane pre-uroporphyrinogen in several discrete steps.</text>
</comment>
<comment type="catalytic activity">
    <reaction>
        <text>4 porphobilinogen + H2O = hydroxymethylbilane + 4 NH4(+)</text>
        <dbReference type="Rhea" id="RHEA:13185"/>
        <dbReference type="ChEBI" id="CHEBI:15377"/>
        <dbReference type="ChEBI" id="CHEBI:28938"/>
        <dbReference type="ChEBI" id="CHEBI:57845"/>
        <dbReference type="ChEBI" id="CHEBI:58126"/>
        <dbReference type="EC" id="2.5.1.61"/>
    </reaction>
</comment>
<comment type="cofactor">
    <cofactor>
        <name>dipyrromethane</name>
        <dbReference type="ChEBI" id="CHEBI:60342"/>
    </cofactor>
    <text>Binds 1 dipyrromethane group covalently.</text>
</comment>
<comment type="pathway">
    <text>Porphyrin-containing compound metabolism; protoporphyrin-IX biosynthesis; coproporphyrinogen-III from 5-aminolevulinate: step 2/4.</text>
</comment>
<comment type="subunit">
    <text evidence="1">Monomer.</text>
</comment>
<comment type="miscellaneous">
    <text evidence="1">The porphobilinogen subunits are added to the dipyrromethane group.</text>
</comment>
<comment type="similarity">
    <text evidence="2">Belongs to the HMBS family.</text>
</comment>